<reference key="1">
    <citation type="journal article" date="1997" name="J. Allergy Clin. Immunol.">
        <title>Cloning and expression of the panallergen profilin and the major allergen (Ole e 1) from olive tree pollen.</title>
        <authorList>
            <person name="Asturias J.A."/>
            <person name="Arilla M.C."/>
            <person name="Gomez-Bayon N."/>
            <person name="Martinez J."/>
            <person name="Martinez A."/>
            <person name="Palacios R."/>
        </authorList>
    </citation>
    <scope>NUCLEOTIDE SEQUENCE [MRNA]</scope>
    <source>
        <tissue>Pollen</tissue>
    </source>
</reference>
<reference key="2">
    <citation type="journal article" date="2012" name="PLoS ONE">
        <title>Characterization of profilin polymorphism in pollen with a focus on multifunctionality.</title>
        <authorList>
            <person name="Jimenez-Lopez J.C."/>
            <person name="Morales S."/>
            <person name="Castro A.J."/>
            <person name="Volkmann D."/>
            <person name="Rodriguez-Garcia M.I."/>
            <person name="Alche Jde D."/>
        </authorList>
    </citation>
    <scope>POLYMORPHISM</scope>
</reference>
<reference key="3">
    <citation type="journal article" date="2012" name="Talanta">
        <title>Analysis of olive allergens.</title>
        <authorList>
            <person name="Esteve C."/>
            <person name="Montealegre C."/>
            <person name="Marina M.L."/>
            <person name="Garcia M.C."/>
        </authorList>
    </citation>
    <scope>REVIEW</scope>
    <scope>NOMENCLATURE</scope>
</reference>
<reference key="4">
    <citation type="journal article" date="2013" name="PLoS ONE">
        <title>Analysis of the effects of polymorphism on pollen profilin structural functionality and the generation of conformational, T- and B-cell epitopes.</title>
        <authorList>
            <person name="Jimenez-Lopez J.C."/>
            <person name="Rodriguez-Garcia M.I."/>
            <person name="Alche J.D."/>
        </authorList>
    </citation>
    <scope>3D-STRUCTURE MODELING</scope>
    <scope>DISULFIDE BOND</scope>
</reference>
<comment type="function">
    <text evidence="1">Binds to actin and affects the structure of the cytoskeleton. At high concentrations, profilin prevents the polymerization of actin, whereas it enhances it at low concentrations. By binding to PIP2, it inhibits the formation of IP3 and DG (By similarity).</text>
</comment>
<comment type="subunit">
    <text>Occurs in many kinds of cells as a complex with monomeric actin in a 1:1 ratio.</text>
</comment>
<comment type="subcellular location">
    <subcellularLocation>
        <location evidence="1">Cytoplasm</location>
        <location evidence="1">Cytoskeleton</location>
    </subcellularLocation>
</comment>
<comment type="PTM">
    <text evidence="1">Phosphorylated by MAP kinases.</text>
</comment>
<comment type="polymorphism">
    <text>Several isoforms of the allergen exist due to polymorphism.</text>
</comment>
<comment type="allergen">
    <text>Causes an allergic reaction in human.</text>
</comment>
<comment type="miscellaneous">
    <text evidence="3">The variability of the residues taking part of IgE-binding epitopes might be responsible of the difference in cross-reactivity among olive pollen cultivars, and between distantly related pollen species, leading to a variable range of allergy reactions among atopic patients.</text>
</comment>
<comment type="similarity">
    <text evidence="2">Belongs to the profilin family.</text>
</comment>
<feature type="initiator methionine" description="Removed" evidence="1">
    <location>
        <position position="1"/>
    </location>
</feature>
<feature type="chain" id="PRO_0000199658" description="Profilin-3">
    <location>
        <begin position="2"/>
        <end position="134"/>
    </location>
</feature>
<feature type="short sequence motif" description="Involved in PIP2 interaction">
    <location>
        <begin position="84"/>
        <end position="100"/>
    </location>
</feature>
<feature type="modified residue" description="Phosphothreonine" evidence="1">
    <location>
        <position position="114"/>
    </location>
</feature>
<feature type="disulfide bond" evidence="3">
    <location>
        <begin position="13"/>
        <end position="118"/>
    </location>
</feature>
<gene>
    <name type="primary">PRO3</name>
</gene>
<evidence type="ECO:0000250" key="1"/>
<evidence type="ECO:0000305" key="2"/>
<evidence type="ECO:0000305" key="3">
    <source>
    </source>
</evidence>
<proteinExistence type="evidence at protein level"/>
<name>PROFC_OLEEU</name>
<dbReference type="EMBL" id="Y12430">
    <property type="protein sequence ID" value="CAA73040.1"/>
    <property type="molecule type" value="mRNA"/>
</dbReference>
<dbReference type="SMR" id="O24171"/>
<dbReference type="Allergome" id="3383">
    <property type="allergen name" value="Ole e 2.0101"/>
</dbReference>
<dbReference type="Allergome" id="490">
    <property type="allergen name" value="Ole e 2"/>
</dbReference>
<dbReference type="GO" id="GO:0005938">
    <property type="term" value="C:cell cortex"/>
    <property type="evidence" value="ECO:0007669"/>
    <property type="project" value="TreeGrafter"/>
</dbReference>
<dbReference type="GO" id="GO:0005856">
    <property type="term" value="C:cytoskeleton"/>
    <property type="evidence" value="ECO:0007669"/>
    <property type="project" value="UniProtKB-SubCell"/>
</dbReference>
<dbReference type="GO" id="GO:0003785">
    <property type="term" value="F:actin monomer binding"/>
    <property type="evidence" value="ECO:0007669"/>
    <property type="project" value="TreeGrafter"/>
</dbReference>
<dbReference type="CDD" id="cd00148">
    <property type="entry name" value="PROF"/>
    <property type="match status" value="1"/>
</dbReference>
<dbReference type="FunFam" id="3.30.450.30:FF:000001">
    <property type="entry name" value="Profilin"/>
    <property type="match status" value="1"/>
</dbReference>
<dbReference type="Gene3D" id="3.30.450.30">
    <property type="entry name" value="Dynein light chain 2a, cytoplasmic"/>
    <property type="match status" value="1"/>
</dbReference>
<dbReference type="InterPro" id="IPR048278">
    <property type="entry name" value="PFN"/>
</dbReference>
<dbReference type="InterPro" id="IPR005455">
    <property type="entry name" value="PFN_euk"/>
</dbReference>
<dbReference type="InterPro" id="IPR036140">
    <property type="entry name" value="PFN_sf"/>
</dbReference>
<dbReference type="InterPro" id="IPR027310">
    <property type="entry name" value="Profilin_CS"/>
</dbReference>
<dbReference type="PANTHER" id="PTHR11604">
    <property type="entry name" value="PROFILIN"/>
    <property type="match status" value="1"/>
</dbReference>
<dbReference type="PANTHER" id="PTHR11604:SF25">
    <property type="entry name" value="PROFILIN-5"/>
    <property type="match status" value="1"/>
</dbReference>
<dbReference type="Pfam" id="PF00235">
    <property type="entry name" value="Profilin"/>
    <property type="match status" value="1"/>
</dbReference>
<dbReference type="PRINTS" id="PR00392">
    <property type="entry name" value="PROFILIN"/>
</dbReference>
<dbReference type="PRINTS" id="PR01640">
    <property type="entry name" value="PROFILINPLNT"/>
</dbReference>
<dbReference type="SMART" id="SM00392">
    <property type="entry name" value="PROF"/>
    <property type="match status" value="1"/>
</dbReference>
<dbReference type="SUPFAM" id="SSF55770">
    <property type="entry name" value="Profilin (actin-binding protein)"/>
    <property type="match status" value="1"/>
</dbReference>
<dbReference type="PROSITE" id="PS00414">
    <property type="entry name" value="PROFILIN"/>
    <property type="match status" value="1"/>
</dbReference>
<keyword id="KW-0009">Actin-binding</keyword>
<keyword id="KW-0020">Allergen</keyword>
<keyword id="KW-0963">Cytoplasm</keyword>
<keyword id="KW-0206">Cytoskeleton</keyword>
<keyword id="KW-1015">Disulfide bond</keyword>
<keyword id="KW-0597">Phosphoprotein</keyword>
<sequence length="134" mass="14399">MSWQAYVDDHLMCDIEGHEGHRLTAAAIVGHDGSVWAQSATFPQFKPEEMNGIMTDFNEPGHLAPTGLHLGGTKYMVIQGEAGAVIRGKKGSGGITIKKTGQALVFGIYEEPVTPGQCNMVAERLGDYLLEQGL</sequence>
<protein>
    <recommendedName>
        <fullName>Profilin-3</fullName>
    </recommendedName>
    <alternativeName>
        <fullName>Pollen allergen Ole e 2</fullName>
    </alternativeName>
    <allergenName>Ole e 2</allergenName>
</protein>
<organism>
    <name type="scientific">Olea europaea</name>
    <name type="common">Common olive</name>
    <dbReference type="NCBI Taxonomy" id="4146"/>
    <lineage>
        <taxon>Eukaryota</taxon>
        <taxon>Viridiplantae</taxon>
        <taxon>Streptophyta</taxon>
        <taxon>Embryophyta</taxon>
        <taxon>Tracheophyta</taxon>
        <taxon>Spermatophyta</taxon>
        <taxon>Magnoliopsida</taxon>
        <taxon>eudicotyledons</taxon>
        <taxon>Gunneridae</taxon>
        <taxon>Pentapetalae</taxon>
        <taxon>asterids</taxon>
        <taxon>lamiids</taxon>
        <taxon>Lamiales</taxon>
        <taxon>Oleaceae</taxon>
        <taxon>Oleeae</taxon>
        <taxon>Olea</taxon>
    </lineage>
</organism>
<accession>O24171</accession>